<evidence type="ECO:0000269" key="1">
    <source>
    </source>
</evidence>
<evidence type="ECO:0000269" key="2">
    <source>
    </source>
</evidence>
<evidence type="ECO:0000303" key="3">
    <source>
    </source>
</evidence>
<evidence type="ECO:0000305" key="4"/>
<proteinExistence type="evidence at protein level"/>
<reference key="1">
    <citation type="submission" date="1997-07" db="EMBL/GenBank/DDBJ databases">
        <title>Sequence analysis of the 70kb region between 17 and 23 degree of the Bacillus subtilis chromosome.</title>
        <authorList>
            <person name="Haga K."/>
            <person name="Liu H."/>
            <person name="Yasumoto K."/>
            <person name="Takahashi H."/>
            <person name="Yoshikawa H."/>
        </authorList>
    </citation>
    <scope>NUCLEOTIDE SEQUENCE [GENOMIC DNA]</scope>
    <source>
        <strain>168</strain>
    </source>
</reference>
<reference key="2">
    <citation type="journal article" date="1997" name="Nature">
        <title>The complete genome sequence of the Gram-positive bacterium Bacillus subtilis.</title>
        <authorList>
            <person name="Kunst F."/>
            <person name="Ogasawara N."/>
            <person name="Moszer I."/>
            <person name="Albertini A.M."/>
            <person name="Alloni G."/>
            <person name="Azevedo V."/>
            <person name="Bertero M.G."/>
            <person name="Bessieres P."/>
            <person name="Bolotin A."/>
            <person name="Borchert S."/>
            <person name="Borriss R."/>
            <person name="Boursier L."/>
            <person name="Brans A."/>
            <person name="Braun M."/>
            <person name="Brignell S.C."/>
            <person name="Bron S."/>
            <person name="Brouillet S."/>
            <person name="Bruschi C.V."/>
            <person name="Caldwell B."/>
            <person name="Capuano V."/>
            <person name="Carter N.M."/>
            <person name="Choi S.-K."/>
            <person name="Codani J.-J."/>
            <person name="Connerton I.F."/>
            <person name="Cummings N.J."/>
            <person name="Daniel R.A."/>
            <person name="Denizot F."/>
            <person name="Devine K.M."/>
            <person name="Duesterhoeft A."/>
            <person name="Ehrlich S.D."/>
            <person name="Emmerson P.T."/>
            <person name="Entian K.-D."/>
            <person name="Errington J."/>
            <person name="Fabret C."/>
            <person name="Ferrari E."/>
            <person name="Foulger D."/>
            <person name="Fritz C."/>
            <person name="Fujita M."/>
            <person name="Fujita Y."/>
            <person name="Fuma S."/>
            <person name="Galizzi A."/>
            <person name="Galleron N."/>
            <person name="Ghim S.-Y."/>
            <person name="Glaser P."/>
            <person name="Goffeau A."/>
            <person name="Golightly E.J."/>
            <person name="Grandi G."/>
            <person name="Guiseppi G."/>
            <person name="Guy B.J."/>
            <person name="Haga K."/>
            <person name="Haiech J."/>
            <person name="Harwood C.R."/>
            <person name="Henaut A."/>
            <person name="Hilbert H."/>
            <person name="Holsappel S."/>
            <person name="Hosono S."/>
            <person name="Hullo M.-F."/>
            <person name="Itaya M."/>
            <person name="Jones L.-M."/>
            <person name="Joris B."/>
            <person name="Karamata D."/>
            <person name="Kasahara Y."/>
            <person name="Klaerr-Blanchard M."/>
            <person name="Klein C."/>
            <person name="Kobayashi Y."/>
            <person name="Koetter P."/>
            <person name="Koningstein G."/>
            <person name="Krogh S."/>
            <person name="Kumano M."/>
            <person name="Kurita K."/>
            <person name="Lapidus A."/>
            <person name="Lardinois S."/>
            <person name="Lauber J."/>
            <person name="Lazarevic V."/>
            <person name="Lee S.-M."/>
            <person name="Levine A."/>
            <person name="Liu H."/>
            <person name="Masuda S."/>
            <person name="Mauel C."/>
            <person name="Medigue C."/>
            <person name="Medina N."/>
            <person name="Mellado R.P."/>
            <person name="Mizuno M."/>
            <person name="Moestl D."/>
            <person name="Nakai S."/>
            <person name="Noback M."/>
            <person name="Noone D."/>
            <person name="O'Reilly M."/>
            <person name="Ogawa K."/>
            <person name="Ogiwara A."/>
            <person name="Oudega B."/>
            <person name="Park S.-H."/>
            <person name="Parro V."/>
            <person name="Pohl T.M."/>
            <person name="Portetelle D."/>
            <person name="Porwollik S."/>
            <person name="Prescott A.M."/>
            <person name="Presecan E."/>
            <person name="Pujic P."/>
            <person name="Purnelle B."/>
            <person name="Rapoport G."/>
            <person name="Rey M."/>
            <person name="Reynolds S."/>
            <person name="Rieger M."/>
            <person name="Rivolta C."/>
            <person name="Rocha E."/>
            <person name="Roche B."/>
            <person name="Rose M."/>
            <person name="Sadaie Y."/>
            <person name="Sato T."/>
            <person name="Scanlan E."/>
            <person name="Schleich S."/>
            <person name="Schroeter R."/>
            <person name="Scoffone F."/>
            <person name="Sekiguchi J."/>
            <person name="Sekowska A."/>
            <person name="Seror S.J."/>
            <person name="Serror P."/>
            <person name="Shin B.-S."/>
            <person name="Soldo B."/>
            <person name="Sorokin A."/>
            <person name="Tacconi E."/>
            <person name="Takagi T."/>
            <person name="Takahashi H."/>
            <person name="Takemaru K."/>
            <person name="Takeuchi M."/>
            <person name="Tamakoshi A."/>
            <person name="Tanaka T."/>
            <person name="Terpstra P."/>
            <person name="Tognoni A."/>
            <person name="Tosato V."/>
            <person name="Uchiyama S."/>
            <person name="Vandenbol M."/>
            <person name="Vannier F."/>
            <person name="Vassarotti A."/>
            <person name="Viari A."/>
            <person name="Wambutt R."/>
            <person name="Wedler E."/>
            <person name="Wedler H."/>
            <person name="Weitzenegger T."/>
            <person name="Winters P."/>
            <person name="Wipat A."/>
            <person name="Yamamoto H."/>
            <person name="Yamane K."/>
            <person name="Yasumoto K."/>
            <person name="Yata K."/>
            <person name="Yoshida K."/>
            <person name="Yoshikawa H.-F."/>
            <person name="Zumstein E."/>
            <person name="Yoshikawa H."/>
            <person name="Danchin A."/>
        </authorList>
    </citation>
    <scope>NUCLEOTIDE SEQUENCE [LARGE SCALE GENOMIC DNA]</scope>
    <source>
        <strain>168</strain>
    </source>
</reference>
<reference key="3">
    <citation type="journal article" date="2009" name="Microbiology">
        <title>From a consortium sequence to a unified sequence: the Bacillus subtilis 168 reference genome a decade later.</title>
        <authorList>
            <person name="Barbe V."/>
            <person name="Cruveiller S."/>
            <person name="Kunst F."/>
            <person name="Lenoble P."/>
            <person name="Meurice G."/>
            <person name="Sekowska A."/>
            <person name="Vallenet D."/>
            <person name="Wang T."/>
            <person name="Moszer I."/>
            <person name="Medigue C."/>
            <person name="Danchin A."/>
        </authorList>
    </citation>
    <scope>SEQUENCE REVISION TO 108 AND C-TERMINUS</scope>
</reference>
<reference key="4">
    <citation type="journal article" date="2003" name="Science">
        <title>Cannibalism by sporulating bacteria.</title>
        <authorList>
            <person name="Gonzalez-Pastor J.E."/>
            <person name="Hobbs E.C."/>
            <person name="Losick R."/>
        </authorList>
    </citation>
    <scope>FUNCTION IN SYNTHESIS OF SKFA</scope>
    <scope>INDUCTION</scope>
    <scope>DISRUPTION PHENOTYPE</scope>
    <source>
        <strain>168 / PY79</strain>
    </source>
</reference>
<reference key="5">
    <citation type="journal article" date="2007" name="J. Bacteriol.">
        <title>Abh and AbrB control of Bacillus subtilis antimicrobial gene expression.</title>
        <authorList>
            <person name="Strauch M.A."/>
            <person name="Bobay B.G."/>
            <person name="Cavanagh J."/>
            <person name="Yao F."/>
            <person name="Wilson A."/>
            <person name="Le Breton Y."/>
        </authorList>
    </citation>
    <scope>REPRESSION BY ABRB AND ABH</scope>
</reference>
<gene>
    <name evidence="3" type="primary">skfG</name>
    <name type="synonym">ybdD</name>
    <name type="ordered locus">BSU01970</name>
</gene>
<dbReference type="EMBL" id="AB006424">
    <property type="protein sequence ID" value="BAA33094.1"/>
    <property type="status" value="ALT_FRAME"/>
    <property type="molecule type" value="Genomic_DNA"/>
</dbReference>
<dbReference type="EMBL" id="AL009126">
    <property type="protein sequence ID" value="CAB11991.2"/>
    <property type="molecule type" value="Genomic_DNA"/>
</dbReference>
<dbReference type="PIR" id="B69747">
    <property type="entry name" value="B69747"/>
</dbReference>
<dbReference type="RefSeq" id="NP_388079.2">
    <property type="nucleotide sequence ID" value="NC_000964.3"/>
</dbReference>
<dbReference type="RefSeq" id="WP_003234897.1">
    <property type="nucleotide sequence ID" value="NZ_OZ025638.1"/>
</dbReference>
<dbReference type="SMR" id="O31429"/>
<dbReference type="FunCoup" id="O31429">
    <property type="interactions" value="148"/>
</dbReference>
<dbReference type="STRING" id="224308.BSU01970"/>
<dbReference type="PaxDb" id="224308-BSU01970"/>
<dbReference type="EnsemblBacteria" id="CAB11991">
    <property type="protein sequence ID" value="CAB11991"/>
    <property type="gene ID" value="BSU_01970"/>
</dbReference>
<dbReference type="GeneID" id="938502"/>
<dbReference type="KEGG" id="bsu:BSU01970"/>
<dbReference type="PATRIC" id="fig|224308.179.peg.203"/>
<dbReference type="eggNOG" id="COG1413">
    <property type="taxonomic scope" value="Bacteria"/>
</dbReference>
<dbReference type="InParanoid" id="O31429"/>
<dbReference type="OrthoDB" id="2663371at2"/>
<dbReference type="BioCyc" id="BSUB:BSU01970-MONOMER"/>
<dbReference type="Proteomes" id="UP000001570">
    <property type="component" value="Chromosome"/>
</dbReference>
<dbReference type="GO" id="GO:0030152">
    <property type="term" value="P:bacteriocin biosynthetic process"/>
    <property type="evidence" value="ECO:0007669"/>
    <property type="project" value="UniProtKB-KW"/>
</dbReference>
<dbReference type="Gene3D" id="1.25.10.10">
    <property type="entry name" value="Leucine-rich Repeat Variant"/>
    <property type="match status" value="1"/>
</dbReference>
<dbReference type="InterPro" id="IPR011989">
    <property type="entry name" value="ARM-like"/>
</dbReference>
<dbReference type="InterPro" id="IPR016024">
    <property type="entry name" value="ARM-type_fold"/>
</dbReference>
<dbReference type="SUPFAM" id="SSF48371">
    <property type="entry name" value="ARM repeat"/>
    <property type="match status" value="1"/>
</dbReference>
<keyword id="KW-0045">Antibiotic biosynthesis</keyword>
<keyword id="KW-0871">Bacteriocin biosynthesis</keyword>
<keyword id="KW-1185">Reference proteome</keyword>
<name>SKFG_BACSU</name>
<protein>
    <recommendedName>
        <fullName>Uncharacterized protein SkfG</fullName>
    </recommendedName>
</protein>
<feature type="chain" id="PRO_0000312742" description="Uncharacterized protein SkfG">
    <location>
        <begin position="1"/>
        <end position="171"/>
    </location>
</feature>
<feature type="sequence conflict" description="In Ref. 1; BAA33094." evidence="4" ref="1">
    <original>Q</original>
    <variation>H</variation>
    <location>
        <position position="108"/>
    </location>
</feature>
<organism>
    <name type="scientific">Bacillus subtilis (strain 168)</name>
    <dbReference type="NCBI Taxonomy" id="224308"/>
    <lineage>
        <taxon>Bacteria</taxon>
        <taxon>Bacillati</taxon>
        <taxon>Bacillota</taxon>
        <taxon>Bacilli</taxon>
        <taxon>Bacillales</taxon>
        <taxon>Bacillaceae</taxon>
        <taxon>Bacillus</taxon>
    </lineage>
</organism>
<sequence length="171" mass="18510">MNSNGDKLSLSVQNLANTNEITIVQAIGELKKSGKDAIPVLVEALKEEGSLCNIAAAVLGEFGEDASEAAEELSCLLKSHAEDTRMAAAISLMRIGKPSLPFVIKIAQESEGQSCFWASWCIAWIDPSCIEPKMYKCLKYEHEHPSGIVAPFAAEEALGKLIAFQLKDKED</sequence>
<accession>O31429</accession>
<accession>Q7DL60</accession>
<comment type="function">
    <text evidence="1">Required for production of the bacteriocin SkfA.</text>
</comment>
<comment type="induction">
    <text evidence="1 2">By Spo0A (PubMed:12817086) and PhoP, during nutrient starvation, especially phosphate starvation. Repressed by AbrB during normal growth when nutrients are plentiful, in association with the transcriptional repressor Abh.</text>
</comment>
<comment type="disruption phenotype">
    <text evidence="1">When the skfA-skfB-skfC-skfE-skfF-skfG-skfH operon is deleted, increased rate of spore formation; a double operon deletion (sdpA-sdpC plus skfA-skfH) makes spores even faster (PubMed:12817086).</text>
</comment>
<comment type="miscellaneous">
    <text evidence="1">Accelerated cannibalism by skf- cells is seen on solid media but not in liquid media.</text>
</comment>
<comment type="sequence caution" evidence="4">
    <conflict type="frameshift">
        <sequence resource="EMBL-CDS" id="BAA33094"/>
    </conflict>
</comment>